<evidence type="ECO:0000255" key="1">
    <source>
        <dbReference type="HAMAP-Rule" id="MF_00805"/>
    </source>
</evidence>
<name>CITD_ECOSM</name>
<comment type="function">
    <text evidence="1">Covalent carrier of the coenzyme of citrate lyase.</text>
</comment>
<comment type="subunit">
    <text evidence="1">Oligomer with a subunit composition of (alpha,beta,gamma)6.</text>
</comment>
<comment type="subcellular location">
    <subcellularLocation>
        <location evidence="1">Cytoplasm</location>
    </subcellularLocation>
</comment>
<comment type="similarity">
    <text evidence="1">Belongs to the CitD family.</text>
</comment>
<sequence>MKINQPAVAGTLESGDVMIRIAPLDTQDIDLQINSSVEKQFGDAIRTTILDVLARYNVRGVQLNVDDKGALDCILRARLEALLARASGIPALPWEDCQ</sequence>
<proteinExistence type="inferred from homology"/>
<accession>B1LKK9</accession>
<organism>
    <name type="scientific">Escherichia coli (strain SMS-3-5 / SECEC)</name>
    <dbReference type="NCBI Taxonomy" id="439855"/>
    <lineage>
        <taxon>Bacteria</taxon>
        <taxon>Pseudomonadati</taxon>
        <taxon>Pseudomonadota</taxon>
        <taxon>Gammaproteobacteria</taxon>
        <taxon>Enterobacterales</taxon>
        <taxon>Enterobacteriaceae</taxon>
        <taxon>Escherichia</taxon>
    </lineage>
</organism>
<gene>
    <name evidence="1" type="primary">citD</name>
    <name type="ordered locus">EcSMS35_0636</name>
</gene>
<reference key="1">
    <citation type="journal article" date="2008" name="J. Bacteriol.">
        <title>Insights into the environmental resistance gene pool from the genome sequence of the multidrug-resistant environmental isolate Escherichia coli SMS-3-5.</title>
        <authorList>
            <person name="Fricke W.F."/>
            <person name="Wright M.S."/>
            <person name="Lindell A.H."/>
            <person name="Harkins D.M."/>
            <person name="Baker-Austin C."/>
            <person name="Ravel J."/>
            <person name="Stepanauskas R."/>
        </authorList>
    </citation>
    <scope>NUCLEOTIDE SEQUENCE [LARGE SCALE GENOMIC DNA]</scope>
    <source>
        <strain>SMS-3-5 / SECEC</strain>
    </source>
</reference>
<dbReference type="EMBL" id="CP000970">
    <property type="protein sequence ID" value="ACB18538.1"/>
    <property type="molecule type" value="Genomic_DNA"/>
</dbReference>
<dbReference type="RefSeq" id="WP_000700703.1">
    <property type="nucleotide sequence ID" value="NC_010498.1"/>
</dbReference>
<dbReference type="SMR" id="B1LKK9"/>
<dbReference type="GeneID" id="93776868"/>
<dbReference type="KEGG" id="ecm:EcSMS35_0636"/>
<dbReference type="HOGENOM" id="CLU_158489_0_0_6"/>
<dbReference type="Proteomes" id="UP000007011">
    <property type="component" value="Chromosome"/>
</dbReference>
<dbReference type="GO" id="GO:0005737">
    <property type="term" value="C:cytoplasm"/>
    <property type="evidence" value="ECO:0007669"/>
    <property type="project" value="UniProtKB-SubCell"/>
</dbReference>
<dbReference type="HAMAP" id="MF_00805">
    <property type="entry name" value="CitD"/>
    <property type="match status" value="1"/>
</dbReference>
<dbReference type="InterPro" id="IPR006495">
    <property type="entry name" value="CitD"/>
</dbReference>
<dbReference type="InterPro" id="IPR023439">
    <property type="entry name" value="Mal_deCO2ase/Cit_lyase_ACP"/>
</dbReference>
<dbReference type="NCBIfam" id="TIGR01608">
    <property type="entry name" value="citD"/>
    <property type="match status" value="1"/>
</dbReference>
<dbReference type="NCBIfam" id="NF009726">
    <property type="entry name" value="PRK13253.1"/>
    <property type="match status" value="1"/>
</dbReference>
<dbReference type="Pfam" id="PF06857">
    <property type="entry name" value="ACP"/>
    <property type="match status" value="1"/>
</dbReference>
<dbReference type="PIRSF" id="PIRSF002736">
    <property type="entry name" value="Citrt_lyas_gamma"/>
    <property type="match status" value="1"/>
</dbReference>
<protein>
    <recommendedName>
        <fullName evidence="1">Citrate lyase acyl carrier protein</fullName>
    </recommendedName>
    <alternativeName>
        <fullName evidence="1">Citrate lyase gamma chain</fullName>
    </alternativeName>
</protein>
<keyword id="KW-0963">Cytoplasm</keyword>
<keyword id="KW-0597">Phosphoprotein</keyword>
<feature type="chain" id="PRO_1000133970" description="Citrate lyase acyl carrier protein">
    <location>
        <begin position="1"/>
        <end position="98"/>
    </location>
</feature>
<feature type="modified residue" description="O-(phosphoribosyl dephospho-coenzyme A)serine" evidence="1">
    <location>
        <position position="14"/>
    </location>
</feature>